<evidence type="ECO:0000250" key="1">
    <source>
        <dbReference type="UniProtKB" id="Q99942"/>
    </source>
</evidence>
<evidence type="ECO:0000255" key="2"/>
<evidence type="ECO:0000255" key="3">
    <source>
        <dbReference type="PROSITE-ProRule" id="PRU00175"/>
    </source>
</evidence>
<evidence type="ECO:0000256" key="4">
    <source>
        <dbReference type="SAM" id="MobiDB-lite"/>
    </source>
</evidence>
<evidence type="ECO:0000305" key="5"/>
<evidence type="ECO:0000312" key="6">
    <source>
        <dbReference type="RGD" id="1588458"/>
    </source>
</evidence>
<accession>Q5M807</accession>
<comment type="function">
    <text evidence="1">Membrane-bound E3 ubiquitin-protein ligase that mediates ubiquitination of target proteins. May function together with E2 ubiquitin-conjugating enzymes UBE2D1/UBCH5A and UBE2D2/UBC4. Mediates ubiquitination of PXN/paxillin,thereby regulating cell motility and localization of PXN/paxillin. Catalyzes ubiquitination of Salmonella type III secreted protein sopA. Mediates the 'Lys-63'-linked polyubiquitination of JKAMP thereby regulating JKAMP function by decreasing its association with components of the proteasome and ERAD; the ubiquitination appears to involve E2 ubiquitin-conjugating enzyme UBE2N. Mediates the 'Lys-48'-linked polyubiquitination of STING1 at 'Lys-150' leading to its proteasomal degradation; the ubiquitination occurs in mitochondria after viral transfection and regulates antiviral responses. Catalyzes ubiquitination and subsequent degradation of ATG4B, thereby inhibiting autophagy.</text>
</comment>
<comment type="catalytic activity">
    <reaction evidence="1">
        <text>S-ubiquitinyl-[E2 ubiquitin-conjugating enzyme]-L-cysteine + [acceptor protein]-L-lysine = [E2 ubiquitin-conjugating enzyme]-L-cysteine + N(6)-ubiquitinyl-[acceptor protein]-L-lysine.</text>
        <dbReference type="EC" id="2.3.2.27"/>
    </reaction>
</comment>
<comment type="pathway">
    <text evidence="1">Protein modification; protein ubiquitination.</text>
</comment>
<comment type="subunit">
    <text evidence="1">Interacts with PXN. Interacts with JKAMP. Interacts with STING1; the interaction of endogenous proteins is dependent on viral infection.</text>
</comment>
<comment type="subcellular location">
    <subcellularLocation>
        <location evidence="1">Cell membrane</location>
        <topology evidence="2">Multi-pass membrane protein</topology>
    </subcellularLocation>
    <subcellularLocation>
        <location evidence="1">Mitochondrion membrane</location>
        <topology evidence="2">Multi-pass membrane protein</topology>
    </subcellularLocation>
    <subcellularLocation>
        <location evidence="1">Endoplasmic reticulum membrane</location>
        <topology evidence="2">Multi-pass membrane protein</topology>
    </subcellularLocation>
    <text evidence="1">Predominantly located in the plasma membrane, with some localization occurring within cytoplasmic organelles.</text>
</comment>
<comment type="similarity">
    <text evidence="5">Belongs to the RNF5 family.</text>
</comment>
<proteinExistence type="evidence at transcript level"/>
<organism>
    <name type="scientific">Rattus norvegicus</name>
    <name type="common">Rat</name>
    <dbReference type="NCBI Taxonomy" id="10116"/>
    <lineage>
        <taxon>Eukaryota</taxon>
        <taxon>Metazoa</taxon>
        <taxon>Chordata</taxon>
        <taxon>Craniata</taxon>
        <taxon>Vertebrata</taxon>
        <taxon>Euteleostomi</taxon>
        <taxon>Mammalia</taxon>
        <taxon>Eutheria</taxon>
        <taxon>Euarchontoglires</taxon>
        <taxon>Glires</taxon>
        <taxon>Rodentia</taxon>
        <taxon>Myomorpha</taxon>
        <taxon>Muroidea</taxon>
        <taxon>Muridae</taxon>
        <taxon>Murinae</taxon>
        <taxon>Rattus</taxon>
    </lineage>
</organism>
<feature type="initiator methionine" description="Removed" evidence="1">
    <location>
        <position position="1"/>
    </location>
</feature>
<feature type="chain" id="PRO_0000240395" description="E3 ubiquitin-protein ligase RNF5">
    <location>
        <begin position="2"/>
        <end position="180"/>
    </location>
</feature>
<feature type="transmembrane region" description="Helical" evidence="2">
    <location>
        <begin position="118"/>
        <end position="138"/>
    </location>
</feature>
<feature type="transmembrane region" description="Helical" evidence="2">
    <location>
        <begin position="160"/>
        <end position="180"/>
    </location>
</feature>
<feature type="zinc finger region" description="RING-type" evidence="3">
    <location>
        <begin position="27"/>
        <end position="68"/>
    </location>
</feature>
<feature type="region of interest" description="Disordered" evidence="4">
    <location>
        <begin position="79"/>
        <end position="110"/>
    </location>
</feature>
<feature type="modified residue" description="N-acetylalanine" evidence="1">
    <location>
        <position position="2"/>
    </location>
</feature>
<feature type="modified residue" description="Phosphoserine" evidence="1">
    <location>
        <position position="84"/>
    </location>
</feature>
<feature type="modified residue" description="Phosphothreonine" evidence="1">
    <location>
        <position position="94"/>
    </location>
</feature>
<feature type="modified residue" description="Phosphoserine" evidence="1">
    <location>
        <position position="107"/>
    </location>
</feature>
<reference key="1">
    <citation type="journal article" date="2004" name="Genome Res.">
        <title>The status, quality, and expansion of the NIH full-length cDNA project: the Mammalian Gene Collection (MGC).</title>
        <authorList>
            <consortium name="The MGC Project Team"/>
        </authorList>
    </citation>
    <scope>NUCLEOTIDE SEQUENCE [LARGE SCALE MRNA]</scope>
    <source>
        <tissue>Spleen</tissue>
    </source>
</reference>
<dbReference type="EC" id="2.3.2.27" evidence="1"/>
<dbReference type="EMBL" id="BC088341">
    <property type="protein sequence ID" value="AAH88341.1"/>
    <property type="molecule type" value="mRNA"/>
</dbReference>
<dbReference type="RefSeq" id="NP_001102495.1">
    <property type="nucleotide sequence ID" value="NM_001109025.2"/>
</dbReference>
<dbReference type="SMR" id="Q5M807"/>
<dbReference type="FunCoup" id="Q5M807">
    <property type="interactions" value="650"/>
</dbReference>
<dbReference type="STRING" id="10116.ENSRNOP00000000501"/>
<dbReference type="PhosphoSitePlus" id="Q5M807"/>
<dbReference type="PaxDb" id="10116-ENSRNOP00000000501"/>
<dbReference type="GeneID" id="407784"/>
<dbReference type="KEGG" id="rno:407784"/>
<dbReference type="UCSC" id="RGD:1588458">
    <property type="organism name" value="rat"/>
</dbReference>
<dbReference type="AGR" id="RGD:1588458"/>
<dbReference type="CTD" id="6048"/>
<dbReference type="RGD" id="1588458">
    <property type="gene designation" value="Rnf5"/>
</dbReference>
<dbReference type="VEuPathDB" id="HostDB:ENSRNOG00000000438"/>
<dbReference type="eggNOG" id="KOG0823">
    <property type="taxonomic scope" value="Eukaryota"/>
</dbReference>
<dbReference type="HOGENOM" id="CLU_055198_2_1_1"/>
<dbReference type="InParanoid" id="Q5M807"/>
<dbReference type="OrthoDB" id="59341at9989"/>
<dbReference type="PhylomeDB" id="Q5M807"/>
<dbReference type="TreeFam" id="TF317334"/>
<dbReference type="Reactome" id="R-RNO-382556">
    <property type="pathway name" value="ABC-family proteins mediated transport"/>
</dbReference>
<dbReference type="UniPathway" id="UPA00143"/>
<dbReference type="PRO" id="PR:Q5M807"/>
<dbReference type="Proteomes" id="UP000002494">
    <property type="component" value="Chromosome 20"/>
</dbReference>
<dbReference type="Bgee" id="ENSRNOG00000000438">
    <property type="expression patterns" value="Expressed in kidney and 20 other cell types or tissues"/>
</dbReference>
<dbReference type="ExpressionAtlas" id="Q5M807">
    <property type="expression patterns" value="baseline and differential"/>
</dbReference>
<dbReference type="GO" id="GO:0005789">
    <property type="term" value="C:endoplasmic reticulum membrane"/>
    <property type="evidence" value="ECO:0007669"/>
    <property type="project" value="UniProtKB-SubCell"/>
</dbReference>
<dbReference type="GO" id="GO:0016020">
    <property type="term" value="C:membrane"/>
    <property type="evidence" value="ECO:0000266"/>
    <property type="project" value="RGD"/>
</dbReference>
<dbReference type="GO" id="GO:0031966">
    <property type="term" value="C:mitochondrial membrane"/>
    <property type="evidence" value="ECO:0007669"/>
    <property type="project" value="UniProtKB-SubCell"/>
</dbReference>
<dbReference type="GO" id="GO:0005886">
    <property type="term" value="C:plasma membrane"/>
    <property type="evidence" value="ECO:0007669"/>
    <property type="project" value="UniProtKB-SubCell"/>
</dbReference>
<dbReference type="GO" id="GO:0042802">
    <property type="term" value="F:identical protein binding"/>
    <property type="evidence" value="ECO:0000266"/>
    <property type="project" value="RGD"/>
</dbReference>
<dbReference type="GO" id="GO:0044877">
    <property type="term" value="F:protein-containing complex binding"/>
    <property type="evidence" value="ECO:0000266"/>
    <property type="project" value="RGD"/>
</dbReference>
<dbReference type="GO" id="GO:0061630">
    <property type="term" value="F:ubiquitin protein ligase activity"/>
    <property type="evidence" value="ECO:0000318"/>
    <property type="project" value="GO_Central"/>
</dbReference>
<dbReference type="GO" id="GO:0044390">
    <property type="term" value="F:ubiquitin-like protein conjugating enzyme binding"/>
    <property type="evidence" value="ECO:0000318"/>
    <property type="project" value="GO_Central"/>
</dbReference>
<dbReference type="GO" id="GO:0004842">
    <property type="term" value="F:ubiquitin-protein transferase activity"/>
    <property type="evidence" value="ECO:0000266"/>
    <property type="project" value="RGD"/>
</dbReference>
<dbReference type="GO" id="GO:0008270">
    <property type="term" value="F:zinc ion binding"/>
    <property type="evidence" value="ECO:0007669"/>
    <property type="project" value="UniProtKB-KW"/>
</dbReference>
<dbReference type="GO" id="GO:0036503">
    <property type="term" value="P:ERAD pathway"/>
    <property type="evidence" value="ECO:0000266"/>
    <property type="project" value="RGD"/>
</dbReference>
<dbReference type="GO" id="GO:0010507">
    <property type="term" value="P:negative regulation of autophagy"/>
    <property type="evidence" value="ECO:0000266"/>
    <property type="project" value="RGD"/>
</dbReference>
<dbReference type="GO" id="GO:0030163">
    <property type="term" value="P:protein catabolic process"/>
    <property type="evidence" value="ECO:0000266"/>
    <property type="project" value="RGD"/>
</dbReference>
<dbReference type="GO" id="GO:0031648">
    <property type="term" value="P:protein destabilization"/>
    <property type="evidence" value="ECO:0000266"/>
    <property type="project" value="RGD"/>
</dbReference>
<dbReference type="GO" id="GO:0070936">
    <property type="term" value="P:protein K48-linked ubiquitination"/>
    <property type="evidence" value="ECO:0000266"/>
    <property type="project" value="RGD"/>
</dbReference>
<dbReference type="GO" id="GO:0070534">
    <property type="term" value="P:protein K63-linked ubiquitination"/>
    <property type="evidence" value="ECO:0000266"/>
    <property type="project" value="RGD"/>
</dbReference>
<dbReference type="GO" id="GO:0016567">
    <property type="term" value="P:protein ubiquitination"/>
    <property type="evidence" value="ECO:0000266"/>
    <property type="project" value="RGD"/>
</dbReference>
<dbReference type="GO" id="GO:2000785">
    <property type="term" value="P:regulation of autophagosome assembly"/>
    <property type="evidence" value="ECO:0000266"/>
    <property type="project" value="RGD"/>
</dbReference>
<dbReference type="GO" id="GO:0009617">
    <property type="term" value="P:response to bacterium"/>
    <property type="evidence" value="ECO:0000266"/>
    <property type="project" value="RGD"/>
</dbReference>
<dbReference type="GO" id="GO:0006511">
    <property type="term" value="P:ubiquitin-dependent protein catabolic process"/>
    <property type="evidence" value="ECO:0000266"/>
    <property type="project" value="RGD"/>
</dbReference>
<dbReference type="FunFam" id="3.30.40.10:FF:000062">
    <property type="entry name" value="E3 ubiquitin-protein ligase RNF185"/>
    <property type="match status" value="1"/>
</dbReference>
<dbReference type="Gene3D" id="3.30.40.10">
    <property type="entry name" value="Zinc/RING finger domain, C3HC4 (zinc finger)"/>
    <property type="match status" value="1"/>
</dbReference>
<dbReference type="InterPro" id="IPR045103">
    <property type="entry name" value="RNF5/RNF185-like"/>
</dbReference>
<dbReference type="InterPro" id="IPR001841">
    <property type="entry name" value="Znf_RING"/>
</dbReference>
<dbReference type="InterPro" id="IPR013083">
    <property type="entry name" value="Znf_RING/FYVE/PHD"/>
</dbReference>
<dbReference type="InterPro" id="IPR017907">
    <property type="entry name" value="Znf_RING_CS"/>
</dbReference>
<dbReference type="PANTHER" id="PTHR12313">
    <property type="entry name" value="E3 UBIQUITIN-PROTEIN LIGASE RNF5-RELATED"/>
    <property type="match status" value="1"/>
</dbReference>
<dbReference type="Pfam" id="PF13920">
    <property type="entry name" value="zf-C3HC4_3"/>
    <property type="match status" value="1"/>
</dbReference>
<dbReference type="SMART" id="SM00184">
    <property type="entry name" value="RING"/>
    <property type="match status" value="1"/>
</dbReference>
<dbReference type="SUPFAM" id="SSF57850">
    <property type="entry name" value="RING/U-box"/>
    <property type="match status" value="1"/>
</dbReference>
<dbReference type="PROSITE" id="PS00518">
    <property type="entry name" value="ZF_RING_1"/>
    <property type="match status" value="1"/>
</dbReference>
<dbReference type="PROSITE" id="PS50089">
    <property type="entry name" value="ZF_RING_2"/>
    <property type="match status" value="1"/>
</dbReference>
<keyword id="KW-0007">Acetylation</keyword>
<keyword id="KW-1003">Cell membrane</keyword>
<keyword id="KW-0256">Endoplasmic reticulum</keyword>
<keyword id="KW-0472">Membrane</keyword>
<keyword id="KW-0479">Metal-binding</keyword>
<keyword id="KW-0496">Mitochondrion</keyword>
<keyword id="KW-0597">Phosphoprotein</keyword>
<keyword id="KW-1185">Reference proteome</keyword>
<keyword id="KW-0808">Transferase</keyword>
<keyword id="KW-0812">Transmembrane</keyword>
<keyword id="KW-1133">Transmembrane helix</keyword>
<keyword id="KW-0833">Ubl conjugation pathway</keyword>
<keyword id="KW-0862">Zinc</keyword>
<keyword id="KW-0863">Zinc-finger</keyword>
<sequence length="180" mass="19837">MAAAEEEDGGPEGPNRERGGASATFECNICLETAREAVVSVCGHLYCWPCLHQWLETRPDRQECPVCKAGISREKVVPLYGRGSQKPQDPRLKTPPRPQGQRPAPESRGGFQPFGDAGGFHFSFGVGAFPFGFFTTVFNAHEPFRRGAGVDLGQGHPASSWQDSLFLFLAIFFFFWLLSI</sequence>
<gene>
    <name evidence="6" type="primary">Rnf5</name>
</gene>
<protein>
    <recommendedName>
        <fullName evidence="5">E3 ubiquitin-protein ligase RNF5</fullName>
        <ecNumber evidence="1">2.3.2.27</ecNumber>
    </recommendedName>
    <alternativeName>
        <fullName evidence="1">RING finger protein 5</fullName>
    </alternativeName>
</protein>
<name>RNF5_RAT</name>